<sequence length="972" mass="108613">MSSSPFTNLGNLDTEAIYENKENEYQTNITNETSNVQNLSSGNDDQQYPNSTNDDANNGLTASQAKLQDIAAVTLFQDNNISTTTLAPPSPSPLRLNEAPRRRGRPRKYPPKPIDEGSEPIIKRKRGRPPKIKSSSPSTKLDDPLKPKRGRGRPRLHPLPVVQPSVDEGTTQNNLQMGLDEPNIIEGFAEGHANLSELKPKRGRGRPRKIKPEEGSSSQNGLSPLVVLPAKRGRGRPPLHRSEQKIANTPISNNVTVESTGTNLHTHSQLNPENEQSSSEFYSLNPQSEIRKEVVVTDQPLFSTADVPVKRKRGRPPLNKPKILFGTSTENKIDENRPKRGRGRPRLERPSGLPLDSKSQSLFKRKRGRPPKIASGIVPLSAFTRKHEDMLHDSDALSLKHFAITSPNNQQFLNNQQRESAPLLPRKRGRPPKKRQENAEIRNITPGLTDSSVHSSSATPQSESSSPNSVSPLLPSSDRLPLLRQSQFTPPPKKPNFEVAIISPKKSQHKLYPNPVVESVFNDVPYSEIDSQLHTIKSTIAARLCGKSHIPLVGHMDEQTKLYQWVRQTIVLGEGNSVIIVGPRGSGKSVLVDDILSRAAQEINEKSYVVRLNGTYQTDDKLALREISRQLSIELESIESDEALKSEMNFSDTLTKLLATLSHPVDLGIAEDVMTTSAAVIFVLEEFDLFVQHSRQMLLYNLFDIAQSRKAPILIIGLTTRYDCSESLEKRVKSRFSHMVIPMRPPSSLSEFEQILKSVLYVSDEGGKDQIITCWNQRVDELLSDTRSHLHKLVQHHYFASRNLKLLYVDLLFPILSMAPDRPLLADEDFANISLKVSDHKVELVKNLSLLELALLICAVRFEARDIPACNFNSAYQEYRQLHQSSVINAAASGALAHSSRLWGRDVALEAWETLGSIGLIIPVHPSTNVSGALSRQCQLWQPEVDINVVSVGLREHRRLPSHYYRWLKEVI</sequence>
<reference key="1">
    <citation type="journal article" date="1999" name="Proc. Natl. Acad. Sci. U.S.A.">
        <title>The fission yeast homologue of Orc4p binds to replication origin DNA via multiple AT-hooks.</title>
        <authorList>
            <person name="Chuang R.-Y."/>
            <person name="Kelly T.J."/>
        </authorList>
    </citation>
    <scope>NUCLEOTIDE SEQUENCE [MRNA]</scope>
    <scope>CHARACTERIZATION</scope>
</reference>
<reference key="2">
    <citation type="journal article" date="1999" name="Proc. Natl. Acad. Sci. U.S.A.">
        <title>Identification and reconstitution of the origin recognition complex from Schizosaccharomyces pombe.</title>
        <authorList>
            <person name="Moon K.-Y."/>
            <person name="Kong D."/>
            <person name="Lee J.-K."/>
            <person name="Raychaudhuri S."/>
            <person name="Hurwitz J."/>
        </authorList>
    </citation>
    <scope>NUCLEOTIDE SEQUENCE [MRNA]</scope>
    <scope>SUBUNIT</scope>
</reference>
<reference key="3">
    <citation type="journal article" date="2002" name="Nature">
        <title>The genome sequence of Schizosaccharomyces pombe.</title>
        <authorList>
            <person name="Wood V."/>
            <person name="Gwilliam R."/>
            <person name="Rajandream M.A."/>
            <person name="Lyne M.H."/>
            <person name="Lyne R."/>
            <person name="Stewart A."/>
            <person name="Sgouros J.G."/>
            <person name="Peat N."/>
            <person name="Hayles J."/>
            <person name="Baker S.G."/>
            <person name="Basham D."/>
            <person name="Bowman S."/>
            <person name="Brooks K."/>
            <person name="Brown D."/>
            <person name="Brown S."/>
            <person name="Chillingworth T."/>
            <person name="Churcher C.M."/>
            <person name="Collins M."/>
            <person name="Connor R."/>
            <person name="Cronin A."/>
            <person name="Davis P."/>
            <person name="Feltwell T."/>
            <person name="Fraser A."/>
            <person name="Gentles S."/>
            <person name="Goble A."/>
            <person name="Hamlin N."/>
            <person name="Harris D.E."/>
            <person name="Hidalgo J."/>
            <person name="Hodgson G."/>
            <person name="Holroyd S."/>
            <person name="Hornsby T."/>
            <person name="Howarth S."/>
            <person name="Huckle E.J."/>
            <person name="Hunt S."/>
            <person name="Jagels K."/>
            <person name="James K.D."/>
            <person name="Jones L."/>
            <person name="Jones M."/>
            <person name="Leather S."/>
            <person name="McDonald S."/>
            <person name="McLean J."/>
            <person name="Mooney P."/>
            <person name="Moule S."/>
            <person name="Mungall K.L."/>
            <person name="Murphy L.D."/>
            <person name="Niblett D."/>
            <person name="Odell C."/>
            <person name="Oliver K."/>
            <person name="O'Neil S."/>
            <person name="Pearson D."/>
            <person name="Quail M.A."/>
            <person name="Rabbinowitsch E."/>
            <person name="Rutherford K.M."/>
            <person name="Rutter S."/>
            <person name="Saunders D."/>
            <person name="Seeger K."/>
            <person name="Sharp S."/>
            <person name="Skelton J."/>
            <person name="Simmonds M.N."/>
            <person name="Squares R."/>
            <person name="Squares S."/>
            <person name="Stevens K."/>
            <person name="Taylor K."/>
            <person name="Taylor R.G."/>
            <person name="Tivey A."/>
            <person name="Walsh S.V."/>
            <person name="Warren T."/>
            <person name="Whitehead S."/>
            <person name="Woodward J.R."/>
            <person name="Volckaert G."/>
            <person name="Aert R."/>
            <person name="Robben J."/>
            <person name="Grymonprez B."/>
            <person name="Weltjens I."/>
            <person name="Vanstreels E."/>
            <person name="Rieger M."/>
            <person name="Schaefer M."/>
            <person name="Mueller-Auer S."/>
            <person name="Gabel C."/>
            <person name="Fuchs M."/>
            <person name="Duesterhoeft A."/>
            <person name="Fritzc C."/>
            <person name="Holzer E."/>
            <person name="Moestl D."/>
            <person name="Hilbert H."/>
            <person name="Borzym K."/>
            <person name="Langer I."/>
            <person name="Beck A."/>
            <person name="Lehrach H."/>
            <person name="Reinhardt R."/>
            <person name="Pohl T.M."/>
            <person name="Eger P."/>
            <person name="Zimmermann W."/>
            <person name="Wedler H."/>
            <person name="Wambutt R."/>
            <person name="Purnelle B."/>
            <person name="Goffeau A."/>
            <person name="Cadieu E."/>
            <person name="Dreano S."/>
            <person name="Gloux S."/>
            <person name="Lelaure V."/>
            <person name="Mottier S."/>
            <person name="Galibert F."/>
            <person name="Aves S.J."/>
            <person name="Xiang Z."/>
            <person name="Hunt C."/>
            <person name="Moore K."/>
            <person name="Hurst S.M."/>
            <person name="Lucas M."/>
            <person name="Rochet M."/>
            <person name="Gaillardin C."/>
            <person name="Tallada V.A."/>
            <person name="Garzon A."/>
            <person name="Thode G."/>
            <person name="Daga R.R."/>
            <person name="Cruzado L."/>
            <person name="Jimenez J."/>
            <person name="Sanchez M."/>
            <person name="del Rey F."/>
            <person name="Benito J."/>
            <person name="Dominguez A."/>
            <person name="Revuelta J.L."/>
            <person name="Moreno S."/>
            <person name="Armstrong J."/>
            <person name="Forsburg S.L."/>
            <person name="Cerutti L."/>
            <person name="Lowe T."/>
            <person name="McCombie W.R."/>
            <person name="Paulsen I."/>
            <person name="Potashkin J."/>
            <person name="Shpakovski G.V."/>
            <person name="Ussery D."/>
            <person name="Barrell B.G."/>
            <person name="Nurse P."/>
        </authorList>
    </citation>
    <scope>NUCLEOTIDE SEQUENCE [LARGE SCALE GENOMIC DNA]</scope>
    <source>
        <strain>972 / ATCC 24843</strain>
    </source>
</reference>
<reference key="4">
    <citation type="journal article" date="2002" name="J. Biol. Chem.">
        <title>Purification and characterization of the Schizosaccharomyces pombe origin recognition complex: interaction with origin DNA and Cdc18 protein.</title>
        <authorList>
            <person name="Chuang R.-Y."/>
            <person name="Chretien L."/>
            <person name="Dai J."/>
            <person name="Kelly T.J."/>
        </authorList>
    </citation>
    <scope>FUNCTION</scope>
    <scope>CHARACTERIZATION OF ORC</scope>
    <scope>INTERACTION WITH CDC18</scope>
</reference>
<reference key="5">
    <citation type="journal article" date="2008" name="J. Proteome Res.">
        <title>Phosphoproteome analysis of fission yeast.</title>
        <authorList>
            <person name="Wilson-Grady J.T."/>
            <person name="Villen J."/>
            <person name="Gygi S.P."/>
        </authorList>
    </citation>
    <scope>PHOSPHORYLATION [LARGE SCALE ANALYSIS] AT THR-405; SER-406 AND SER-503</scope>
    <scope>IDENTIFICATION BY MASS SPECTROMETRY</scope>
</reference>
<dbReference type="EMBL" id="AF125185">
    <property type="protein sequence ID" value="AAD21618.1"/>
    <property type="molecule type" value="mRNA"/>
</dbReference>
<dbReference type="EMBL" id="CU329671">
    <property type="protein sequence ID" value="CAB66441.1"/>
    <property type="molecule type" value="Genomic_DNA"/>
</dbReference>
<dbReference type="PIR" id="T50400">
    <property type="entry name" value="T50400"/>
</dbReference>
<dbReference type="RefSeq" id="NP_595825.1">
    <property type="nucleotide sequence ID" value="NM_001021729.2"/>
</dbReference>
<dbReference type="SMR" id="Q9Y794"/>
<dbReference type="BioGRID" id="277810">
    <property type="interactions" value="7"/>
</dbReference>
<dbReference type="FunCoup" id="Q9Y794">
    <property type="interactions" value="116"/>
</dbReference>
<dbReference type="STRING" id="284812.Q9Y794"/>
<dbReference type="iPTMnet" id="Q9Y794"/>
<dbReference type="PaxDb" id="4896-SPBP23A10.13.1"/>
<dbReference type="EnsemblFungi" id="SPBP23A10.13.1">
    <property type="protein sequence ID" value="SPBP23A10.13.1:pep"/>
    <property type="gene ID" value="SPBP23A10.13"/>
</dbReference>
<dbReference type="GeneID" id="2541298"/>
<dbReference type="KEGG" id="spo:2541298"/>
<dbReference type="PomBase" id="SPBP23A10.13">
    <property type="gene designation" value="orc4"/>
</dbReference>
<dbReference type="VEuPathDB" id="FungiDB:SPBP23A10.13"/>
<dbReference type="eggNOG" id="KOG2228">
    <property type="taxonomic scope" value="Eukaryota"/>
</dbReference>
<dbReference type="HOGENOM" id="CLU_322661_0_0_1"/>
<dbReference type="InParanoid" id="Q9Y794"/>
<dbReference type="Reactome" id="R-SPO-176187">
    <property type="pathway name" value="Activation of ATR in response to replication stress"/>
</dbReference>
<dbReference type="Reactome" id="R-SPO-68616">
    <property type="pathway name" value="Assembly of the ORC complex at the origin of replication"/>
</dbReference>
<dbReference type="Reactome" id="R-SPO-68689">
    <property type="pathway name" value="CDC6 association with the ORC:origin complex"/>
</dbReference>
<dbReference type="Reactome" id="R-SPO-68949">
    <property type="pathway name" value="Orc1 removal from chromatin"/>
</dbReference>
<dbReference type="Reactome" id="R-SPO-68962">
    <property type="pathway name" value="Activation of the pre-replicative complex"/>
</dbReference>
<dbReference type="PRO" id="PR:Q9Y794"/>
<dbReference type="Proteomes" id="UP000002485">
    <property type="component" value="Chromosome II"/>
</dbReference>
<dbReference type="GO" id="GO:0000785">
    <property type="term" value="C:chromatin"/>
    <property type="evidence" value="ECO:0000314"/>
    <property type="project" value="PomBase"/>
</dbReference>
<dbReference type="GO" id="GO:0031261">
    <property type="term" value="C:DNA replication preinitiation complex"/>
    <property type="evidence" value="ECO:0000305"/>
    <property type="project" value="PomBase"/>
</dbReference>
<dbReference type="GO" id="GO:0005664">
    <property type="term" value="C:nuclear origin of replication recognition complex"/>
    <property type="evidence" value="ECO:0000314"/>
    <property type="project" value="UniProtKB"/>
</dbReference>
<dbReference type="GO" id="GO:0005656">
    <property type="term" value="C:nuclear pre-replicative complex"/>
    <property type="evidence" value="ECO:0000305"/>
    <property type="project" value="PomBase"/>
</dbReference>
<dbReference type="GO" id="GO:0043596">
    <property type="term" value="C:nuclear replication fork"/>
    <property type="evidence" value="ECO:0000305"/>
    <property type="project" value="PomBase"/>
</dbReference>
<dbReference type="GO" id="GO:0005634">
    <property type="term" value="C:nucleus"/>
    <property type="evidence" value="ECO:0007005"/>
    <property type="project" value="PomBase"/>
</dbReference>
<dbReference type="GO" id="GO:0005524">
    <property type="term" value="F:ATP binding"/>
    <property type="evidence" value="ECO:0000303"/>
    <property type="project" value="PomBase"/>
</dbReference>
<dbReference type="GO" id="GO:0016887">
    <property type="term" value="F:ATP hydrolysis activity"/>
    <property type="evidence" value="ECO:0000255"/>
    <property type="project" value="PomBase"/>
</dbReference>
<dbReference type="GO" id="GO:0003688">
    <property type="term" value="F:DNA replication origin binding"/>
    <property type="evidence" value="ECO:0000314"/>
    <property type="project" value="UniProtKB"/>
</dbReference>
<dbReference type="GO" id="GO:0030674">
    <property type="term" value="F:protein-macromolecule adaptor activity"/>
    <property type="evidence" value="ECO:0000353"/>
    <property type="project" value="PomBase"/>
</dbReference>
<dbReference type="GO" id="GO:0006270">
    <property type="term" value="P:DNA replication initiation"/>
    <property type="evidence" value="ECO:0000318"/>
    <property type="project" value="GO_Central"/>
</dbReference>
<dbReference type="GO" id="GO:0006265">
    <property type="term" value="P:DNA topological change"/>
    <property type="evidence" value="ECO:0000314"/>
    <property type="project" value="PomBase"/>
</dbReference>
<dbReference type="CDD" id="cd00009">
    <property type="entry name" value="AAA"/>
    <property type="match status" value="1"/>
</dbReference>
<dbReference type="FunFam" id="3.40.50.300:FF:001597">
    <property type="entry name" value="Origin recognition complex subunit Orc4"/>
    <property type="match status" value="1"/>
</dbReference>
<dbReference type="Gene3D" id="3.40.50.300">
    <property type="entry name" value="P-loop containing nucleotide triphosphate hydrolases"/>
    <property type="match status" value="1"/>
</dbReference>
<dbReference type="InterPro" id="IPR003593">
    <property type="entry name" value="AAA+_ATPase"/>
</dbReference>
<dbReference type="InterPro" id="IPR041664">
    <property type="entry name" value="AAA_16"/>
</dbReference>
<dbReference type="InterPro" id="IPR017956">
    <property type="entry name" value="AT_hook_DNA-bd_motif"/>
</dbReference>
<dbReference type="InterPro" id="IPR016527">
    <property type="entry name" value="ORC4"/>
</dbReference>
<dbReference type="InterPro" id="IPR032705">
    <property type="entry name" value="ORC4_C"/>
</dbReference>
<dbReference type="InterPro" id="IPR027417">
    <property type="entry name" value="P-loop_NTPase"/>
</dbReference>
<dbReference type="PANTHER" id="PTHR12087">
    <property type="entry name" value="ORIGIN RECOGNITION COMPLEX SUBUNIT 4"/>
    <property type="match status" value="1"/>
</dbReference>
<dbReference type="PANTHER" id="PTHR12087:SF0">
    <property type="entry name" value="ORIGIN RECOGNITION COMPLEX SUBUNIT 4"/>
    <property type="match status" value="1"/>
</dbReference>
<dbReference type="Pfam" id="PF13191">
    <property type="entry name" value="AAA_16"/>
    <property type="match status" value="1"/>
</dbReference>
<dbReference type="Pfam" id="PF02178">
    <property type="entry name" value="AT_hook"/>
    <property type="match status" value="8"/>
</dbReference>
<dbReference type="Pfam" id="PF14629">
    <property type="entry name" value="ORC4_C"/>
    <property type="match status" value="1"/>
</dbReference>
<dbReference type="PRINTS" id="PR00929">
    <property type="entry name" value="ATHOOK"/>
</dbReference>
<dbReference type="SMART" id="SM00382">
    <property type="entry name" value="AAA"/>
    <property type="match status" value="1"/>
</dbReference>
<dbReference type="SMART" id="SM00384">
    <property type="entry name" value="AT_hook"/>
    <property type="match status" value="9"/>
</dbReference>
<dbReference type="SUPFAM" id="SSF52540">
    <property type="entry name" value="P-loop containing nucleoside triphosphate hydrolases"/>
    <property type="match status" value="1"/>
</dbReference>
<accession>Q9Y794</accession>
<gene>
    <name type="primary">orc4</name>
    <name type="synonym">orp4</name>
    <name type="ORF">SPBP23A10.13</name>
</gene>
<keyword id="KW-0067">ATP-binding</keyword>
<keyword id="KW-0235">DNA replication</keyword>
<keyword id="KW-0238">DNA-binding</keyword>
<keyword id="KW-0547">Nucleotide-binding</keyword>
<keyword id="KW-0539">Nucleus</keyword>
<keyword id="KW-0597">Phosphoprotein</keyword>
<keyword id="KW-1185">Reference proteome</keyword>
<keyword id="KW-0677">Repeat</keyword>
<comment type="function">
    <text evidence="4">Component of the origin recognition complex (ORC) that binds origins of replication. It has a role in both chromosomal replication and mating type transcriptional silencing. ORC binds to multiple sites within the ars1 origin of DNA replication in an ATP-independent manner. This binding is mediated by the N-terminal A.T hook repeats of orc4.</text>
</comment>
<comment type="subunit">
    <text evidence="3 4">ORC is composed of six subunits. ORC interacts with cdc18, recruiting it to the ars1 origin of replication.</text>
</comment>
<comment type="subcellular location">
    <subcellularLocation>
        <location>Nucleus</location>
    </subcellularLocation>
</comment>
<comment type="similarity">
    <text evidence="6">Belongs to the ORC4 family.</text>
</comment>
<protein>
    <recommendedName>
        <fullName>Origin recognition complex subunit 4</fullName>
    </recommendedName>
</protein>
<evidence type="ECO:0000255" key="1"/>
<evidence type="ECO:0000256" key="2">
    <source>
        <dbReference type="SAM" id="MobiDB-lite"/>
    </source>
</evidence>
<evidence type="ECO:0000269" key="3">
    <source>
    </source>
</evidence>
<evidence type="ECO:0000269" key="4">
    <source>
    </source>
</evidence>
<evidence type="ECO:0000269" key="5">
    <source>
    </source>
</evidence>
<evidence type="ECO:0000305" key="6"/>
<organism>
    <name type="scientific">Schizosaccharomyces pombe (strain 972 / ATCC 24843)</name>
    <name type="common">Fission yeast</name>
    <dbReference type="NCBI Taxonomy" id="284812"/>
    <lineage>
        <taxon>Eukaryota</taxon>
        <taxon>Fungi</taxon>
        <taxon>Dikarya</taxon>
        <taxon>Ascomycota</taxon>
        <taxon>Taphrinomycotina</taxon>
        <taxon>Schizosaccharomycetes</taxon>
        <taxon>Schizosaccharomycetales</taxon>
        <taxon>Schizosaccharomycetaceae</taxon>
        <taxon>Schizosaccharomyces</taxon>
    </lineage>
</organism>
<proteinExistence type="evidence at protein level"/>
<feature type="chain" id="PRO_0000127090" description="Origin recognition complex subunit 4">
    <location>
        <begin position="1"/>
        <end position="972"/>
    </location>
</feature>
<feature type="DNA-binding region" description="A.T hook 1">
    <location>
        <begin position="100"/>
        <end position="112"/>
    </location>
</feature>
<feature type="DNA-binding region" description="A.T hook 2">
    <location>
        <begin position="123"/>
        <end position="135"/>
    </location>
</feature>
<feature type="DNA-binding region" description="A.T hook 3">
    <location>
        <begin position="148"/>
        <end position="160"/>
    </location>
</feature>
<feature type="DNA-binding region" description="A.T hook 4">
    <location>
        <begin position="201"/>
        <end position="213"/>
    </location>
</feature>
<feature type="DNA-binding region" description="A.T hook 5">
    <location>
        <begin position="231"/>
        <end position="243"/>
    </location>
</feature>
<feature type="DNA-binding region" description="A.T hook 6">
    <location>
        <begin position="310"/>
        <end position="322"/>
    </location>
</feature>
<feature type="DNA-binding region" description="A.T hook 7">
    <location>
        <begin position="339"/>
        <end position="351"/>
    </location>
</feature>
<feature type="DNA-binding region" description="A.T hook 8">
    <location>
        <begin position="364"/>
        <end position="376"/>
    </location>
</feature>
<feature type="DNA-binding region" description="A.T hook 9">
    <location>
        <begin position="425"/>
        <end position="437"/>
    </location>
</feature>
<feature type="region of interest" description="Disordered" evidence="2">
    <location>
        <begin position="31"/>
        <end position="59"/>
    </location>
</feature>
<feature type="region of interest" description="Disordered" evidence="2">
    <location>
        <begin position="82"/>
        <end position="172"/>
    </location>
</feature>
<feature type="region of interest" description="Disordered" evidence="2">
    <location>
        <begin position="193"/>
        <end position="223"/>
    </location>
</feature>
<feature type="region of interest" description="Disordered" evidence="2">
    <location>
        <begin position="310"/>
        <end position="374"/>
    </location>
</feature>
<feature type="region of interest" description="Disordered" evidence="2">
    <location>
        <begin position="408"/>
        <end position="477"/>
    </location>
</feature>
<feature type="compositionally biased region" description="Basic residues" evidence="2">
    <location>
        <begin position="147"/>
        <end position="156"/>
    </location>
</feature>
<feature type="compositionally biased region" description="Polar residues" evidence="2">
    <location>
        <begin position="408"/>
        <end position="419"/>
    </location>
</feature>
<feature type="compositionally biased region" description="Low complexity" evidence="2">
    <location>
        <begin position="455"/>
        <end position="477"/>
    </location>
</feature>
<feature type="binding site" evidence="1">
    <location>
        <begin position="541"/>
        <end position="548"/>
    </location>
    <ligand>
        <name>ATP</name>
        <dbReference type="ChEBI" id="CHEBI:30616"/>
    </ligand>
</feature>
<feature type="binding site" evidence="1">
    <location>
        <begin position="582"/>
        <end position="589"/>
    </location>
    <ligand>
        <name>ATP</name>
        <dbReference type="ChEBI" id="CHEBI:30616"/>
    </ligand>
</feature>
<feature type="modified residue" description="Phosphothreonine" evidence="5">
    <location>
        <position position="405"/>
    </location>
</feature>
<feature type="modified residue" description="Phosphoserine" evidence="5">
    <location>
        <position position="406"/>
    </location>
</feature>
<feature type="modified residue" description="Phosphoserine" evidence="5">
    <location>
        <position position="503"/>
    </location>
</feature>
<name>ORC4_SCHPO</name>